<protein>
    <recommendedName>
        <fullName evidence="1">Dihydroxy-acid dehydratase</fullName>
        <shortName evidence="1">DAD</shortName>
        <ecNumber evidence="1">4.2.1.9</ecNumber>
    </recommendedName>
</protein>
<name>ILVD_METMP</name>
<feature type="chain" id="PRO_0000103544" description="Dihydroxy-acid dehydratase">
    <location>
        <begin position="1"/>
        <end position="550"/>
    </location>
</feature>
<feature type="active site" description="Proton acceptor" evidence="1">
    <location>
        <position position="466"/>
    </location>
</feature>
<feature type="binding site" evidence="1">
    <location>
        <position position="78"/>
    </location>
    <ligand>
        <name>Mg(2+)</name>
        <dbReference type="ChEBI" id="CHEBI:18420"/>
    </ligand>
</feature>
<feature type="binding site" evidence="1">
    <location>
        <position position="119"/>
    </location>
    <ligand>
        <name>[2Fe-2S] cluster</name>
        <dbReference type="ChEBI" id="CHEBI:190135"/>
    </ligand>
</feature>
<feature type="binding site" evidence="1">
    <location>
        <position position="120"/>
    </location>
    <ligand>
        <name>Mg(2+)</name>
        <dbReference type="ChEBI" id="CHEBI:18420"/>
    </ligand>
</feature>
<feature type="binding site" description="via carbamate group" evidence="1">
    <location>
        <position position="121"/>
    </location>
    <ligand>
        <name>Mg(2+)</name>
        <dbReference type="ChEBI" id="CHEBI:18420"/>
    </ligand>
</feature>
<feature type="binding site" evidence="1">
    <location>
        <position position="191"/>
    </location>
    <ligand>
        <name>[2Fe-2S] cluster</name>
        <dbReference type="ChEBI" id="CHEBI:190135"/>
    </ligand>
</feature>
<feature type="binding site" evidence="1">
    <location>
        <position position="440"/>
    </location>
    <ligand>
        <name>Mg(2+)</name>
        <dbReference type="ChEBI" id="CHEBI:18420"/>
    </ligand>
</feature>
<feature type="modified residue" description="N6-carboxylysine" evidence="1">
    <location>
        <position position="121"/>
    </location>
</feature>
<accession>Q6M0F3</accession>
<reference key="1">
    <citation type="journal article" date="2004" name="J. Bacteriol.">
        <title>Complete genome sequence of the genetically tractable hydrogenotrophic methanogen Methanococcus maripaludis.</title>
        <authorList>
            <person name="Hendrickson E.L."/>
            <person name="Kaul R."/>
            <person name="Zhou Y."/>
            <person name="Bovee D."/>
            <person name="Chapman P."/>
            <person name="Chung J."/>
            <person name="Conway de Macario E."/>
            <person name="Dodsworth J.A."/>
            <person name="Gillett W."/>
            <person name="Graham D.E."/>
            <person name="Hackett M."/>
            <person name="Haydock A.K."/>
            <person name="Kang A."/>
            <person name="Land M.L."/>
            <person name="Levy R."/>
            <person name="Lie T.J."/>
            <person name="Major T.A."/>
            <person name="Moore B.C."/>
            <person name="Porat I."/>
            <person name="Palmeiri A."/>
            <person name="Rouse G."/>
            <person name="Saenphimmachak C."/>
            <person name="Soell D."/>
            <person name="Van Dien S."/>
            <person name="Wang T."/>
            <person name="Whitman W.B."/>
            <person name="Xia Q."/>
            <person name="Zhang Y."/>
            <person name="Larimer F.W."/>
            <person name="Olson M.V."/>
            <person name="Leigh J.A."/>
        </authorList>
    </citation>
    <scope>NUCLEOTIDE SEQUENCE [LARGE SCALE GENOMIC DNA]</scope>
    <source>
        <strain>DSM 14266 / JCM 13030 / NBRC 101832 / S2 / LL</strain>
    </source>
</reference>
<organism>
    <name type="scientific">Methanococcus maripaludis (strain DSM 14266 / JCM 13030 / NBRC 101832 / S2 / LL)</name>
    <dbReference type="NCBI Taxonomy" id="267377"/>
    <lineage>
        <taxon>Archaea</taxon>
        <taxon>Methanobacteriati</taxon>
        <taxon>Methanobacteriota</taxon>
        <taxon>Methanomada group</taxon>
        <taxon>Methanococci</taxon>
        <taxon>Methanococcales</taxon>
        <taxon>Methanococcaceae</taxon>
        <taxon>Methanococcus</taxon>
    </lineage>
</organism>
<proteinExistence type="inferred from homology"/>
<gene>
    <name evidence="1" type="primary">ilvD</name>
    <name type="ordered locus">MMP0318</name>
</gene>
<dbReference type="EC" id="4.2.1.9" evidence="1"/>
<dbReference type="EMBL" id="BX950229">
    <property type="protein sequence ID" value="CAF29874.1"/>
    <property type="molecule type" value="Genomic_DNA"/>
</dbReference>
<dbReference type="RefSeq" id="WP_011170262.1">
    <property type="nucleotide sequence ID" value="NC_005791.1"/>
</dbReference>
<dbReference type="SMR" id="Q6M0F3"/>
<dbReference type="STRING" id="267377.MMP0318"/>
<dbReference type="EnsemblBacteria" id="CAF29874">
    <property type="protein sequence ID" value="CAF29874"/>
    <property type="gene ID" value="MMP0318"/>
</dbReference>
<dbReference type="GeneID" id="2762188"/>
<dbReference type="KEGG" id="mmp:MMP0318"/>
<dbReference type="PATRIC" id="fig|267377.15.peg.321"/>
<dbReference type="eggNOG" id="arCOG04045">
    <property type="taxonomic scope" value="Archaea"/>
</dbReference>
<dbReference type="HOGENOM" id="CLU_014271_4_2_2"/>
<dbReference type="OrthoDB" id="8674at2157"/>
<dbReference type="UniPathway" id="UPA00047">
    <property type="reaction ID" value="UER00057"/>
</dbReference>
<dbReference type="UniPathway" id="UPA00049">
    <property type="reaction ID" value="UER00061"/>
</dbReference>
<dbReference type="Proteomes" id="UP000000590">
    <property type="component" value="Chromosome"/>
</dbReference>
<dbReference type="GO" id="GO:0005829">
    <property type="term" value="C:cytosol"/>
    <property type="evidence" value="ECO:0007669"/>
    <property type="project" value="TreeGrafter"/>
</dbReference>
<dbReference type="GO" id="GO:0051537">
    <property type="term" value="F:2 iron, 2 sulfur cluster binding"/>
    <property type="evidence" value="ECO:0007669"/>
    <property type="project" value="UniProtKB-UniRule"/>
</dbReference>
<dbReference type="GO" id="GO:0004160">
    <property type="term" value="F:dihydroxy-acid dehydratase activity"/>
    <property type="evidence" value="ECO:0007669"/>
    <property type="project" value="UniProtKB-UniRule"/>
</dbReference>
<dbReference type="GO" id="GO:0000287">
    <property type="term" value="F:magnesium ion binding"/>
    <property type="evidence" value="ECO:0007669"/>
    <property type="project" value="UniProtKB-UniRule"/>
</dbReference>
<dbReference type="GO" id="GO:0009097">
    <property type="term" value="P:isoleucine biosynthetic process"/>
    <property type="evidence" value="ECO:0007669"/>
    <property type="project" value="UniProtKB-UniRule"/>
</dbReference>
<dbReference type="GO" id="GO:0009099">
    <property type="term" value="P:L-valine biosynthetic process"/>
    <property type="evidence" value="ECO:0007669"/>
    <property type="project" value="UniProtKB-UniRule"/>
</dbReference>
<dbReference type="FunFam" id="3.50.30.80:FF:000001">
    <property type="entry name" value="Dihydroxy-acid dehydratase"/>
    <property type="match status" value="1"/>
</dbReference>
<dbReference type="Gene3D" id="3.50.30.80">
    <property type="entry name" value="IlvD/EDD C-terminal domain-like"/>
    <property type="match status" value="1"/>
</dbReference>
<dbReference type="HAMAP" id="MF_00012">
    <property type="entry name" value="IlvD"/>
    <property type="match status" value="1"/>
</dbReference>
<dbReference type="InterPro" id="IPR042096">
    <property type="entry name" value="Dihydro-acid_dehy_C"/>
</dbReference>
<dbReference type="InterPro" id="IPR004404">
    <property type="entry name" value="DihydroxyA_deHydtase"/>
</dbReference>
<dbReference type="InterPro" id="IPR020558">
    <property type="entry name" value="DiOHA_6PGluconate_deHydtase_CS"/>
</dbReference>
<dbReference type="InterPro" id="IPR056740">
    <property type="entry name" value="ILV_EDD_C"/>
</dbReference>
<dbReference type="InterPro" id="IPR000581">
    <property type="entry name" value="ILV_EDD_N"/>
</dbReference>
<dbReference type="InterPro" id="IPR037237">
    <property type="entry name" value="IlvD/EDD_N"/>
</dbReference>
<dbReference type="NCBIfam" id="TIGR00110">
    <property type="entry name" value="ilvD"/>
    <property type="match status" value="1"/>
</dbReference>
<dbReference type="NCBIfam" id="NF002068">
    <property type="entry name" value="PRK00911.1"/>
    <property type="match status" value="1"/>
</dbReference>
<dbReference type="PANTHER" id="PTHR43661">
    <property type="entry name" value="D-XYLONATE DEHYDRATASE"/>
    <property type="match status" value="1"/>
</dbReference>
<dbReference type="PANTHER" id="PTHR43661:SF3">
    <property type="entry name" value="D-XYLONATE DEHYDRATASE YAGF-RELATED"/>
    <property type="match status" value="1"/>
</dbReference>
<dbReference type="Pfam" id="PF24877">
    <property type="entry name" value="ILV_EDD_C"/>
    <property type="match status" value="1"/>
</dbReference>
<dbReference type="Pfam" id="PF00920">
    <property type="entry name" value="ILVD_EDD_N"/>
    <property type="match status" value="1"/>
</dbReference>
<dbReference type="SUPFAM" id="SSF143975">
    <property type="entry name" value="IlvD/EDD N-terminal domain-like"/>
    <property type="match status" value="1"/>
</dbReference>
<dbReference type="SUPFAM" id="SSF52016">
    <property type="entry name" value="LeuD/IlvD-like"/>
    <property type="match status" value="1"/>
</dbReference>
<dbReference type="PROSITE" id="PS00886">
    <property type="entry name" value="ILVD_EDD_1"/>
    <property type="match status" value="1"/>
</dbReference>
<dbReference type="PROSITE" id="PS00887">
    <property type="entry name" value="ILVD_EDD_2"/>
    <property type="match status" value="1"/>
</dbReference>
<evidence type="ECO:0000255" key="1">
    <source>
        <dbReference type="HAMAP-Rule" id="MF_00012"/>
    </source>
</evidence>
<comment type="function">
    <text evidence="1">Functions in the biosynthesis of branched-chain amino acids. Catalyzes the dehydration of (2R,3R)-2,3-dihydroxy-3-methylpentanoate (2,3-dihydroxy-3-methylvalerate) into 2-oxo-3-methylpentanoate (2-oxo-3-methylvalerate) and of (2R)-2,3-dihydroxy-3-methylbutanoate (2,3-dihydroxyisovalerate) into 2-oxo-3-methylbutanoate (2-oxoisovalerate), the penultimate precursor to L-isoleucine and L-valine, respectively.</text>
</comment>
<comment type="catalytic activity">
    <reaction evidence="1">
        <text>(2R)-2,3-dihydroxy-3-methylbutanoate = 3-methyl-2-oxobutanoate + H2O</text>
        <dbReference type="Rhea" id="RHEA:24809"/>
        <dbReference type="ChEBI" id="CHEBI:11851"/>
        <dbReference type="ChEBI" id="CHEBI:15377"/>
        <dbReference type="ChEBI" id="CHEBI:49072"/>
        <dbReference type="EC" id="4.2.1.9"/>
    </reaction>
    <physiologicalReaction direction="left-to-right" evidence="1">
        <dbReference type="Rhea" id="RHEA:24810"/>
    </physiologicalReaction>
</comment>
<comment type="catalytic activity">
    <reaction evidence="1">
        <text>(2R,3R)-2,3-dihydroxy-3-methylpentanoate = (S)-3-methyl-2-oxopentanoate + H2O</text>
        <dbReference type="Rhea" id="RHEA:27694"/>
        <dbReference type="ChEBI" id="CHEBI:15377"/>
        <dbReference type="ChEBI" id="CHEBI:35146"/>
        <dbReference type="ChEBI" id="CHEBI:49258"/>
        <dbReference type="EC" id="4.2.1.9"/>
    </reaction>
    <physiologicalReaction direction="left-to-right" evidence="1">
        <dbReference type="Rhea" id="RHEA:27695"/>
    </physiologicalReaction>
</comment>
<comment type="cofactor">
    <cofactor evidence="1">
        <name>[2Fe-2S] cluster</name>
        <dbReference type="ChEBI" id="CHEBI:190135"/>
    </cofactor>
    <text evidence="1">Binds 1 [2Fe-2S] cluster per subunit. This cluster acts as a Lewis acid cofactor.</text>
</comment>
<comment type="cofactor">
    <cofactor evidence="1">
        <name>Mg(2+)</name>
        <dbReference type="ChEBI" id="CHEBI:18420"/>
    </cofactor>
</comment>
<comment type="pathway">
    <text evidence="1">Amino-acid biosynthesis; L-isoleucine biosynthesis; L-isoleucine from 2-oxobutanoate: step 3/4.</text>
</comment>
<comment type="pathway">
    <text evidence="1">Amino-acid biosynthesis; L-valine biosynthesis; L-valine from pyruvate: step 3/4.</text>
</comment>
<comment type="subunit">
    <text evidence="1">Homodimer.</text>
</comment>
<comment type="similarity">
    <text evidence="1">Belongs to the IlvD/Edd family.</text>
</comment>
<sequence length="550" mass="58718">MISDNVKKGVIRTPNRALLKACGYTDEDMEKPFIGIVNSFTEVVPGHIHLRTLSEAAKHGVYANGGTPFEFNTIGICDGIAMGHEGMKYSLPSREIIADAVESMARAHGFDGLVLIPTCDKIVPGMIMGALRLNIPFIVVTGGPMLPGEFQGKKYELISLFEGVGEYQVGKITEEELKCIEDCACSGAGSCAGLYTANSMACLTEALGLSLPMCATTHAVDAQKVRLAKKSGSKIVDMVKEDLKPTDILTKEAFENAILVDLALGGSTNTTLHIPAIANEIENKFITLDDFDRLSDEVPHIASIKPGGEHYMIDLHNAGGIPAVLNVLKEKIRDTKTVDGRSILEIAESVKYINYDVIRKVEAPVHETAGLRVLKGNLAPNGCVVKIGAVHPKMYKHDGPAKVYNSEDEAISAILGGKIVEGDVIVIRYEGPSGGPGMREMLSPTSAICGMGLDDSVALITDGRFSGGSRGPCIGHVSPEAAAGGVIAAIENGDIIKIDMIEKEINVDLDESVIKERLSKLGEFEPKIKKGYLSRYSKLVSSADEGAVLK</sequence>
<keyword id="KW-0001">2Fe-2S</keyword>
<keyword id="KW-0028">Amino-acid biosynthesis</keyword>
<keyword id="KW-0100">Branched-chain amino acid biosynthesis</keyword>
<keyword id="KW-0408">Iron</keyword>
<keyword id="KW-0411">Iron-sulfur</keyword>
<keyword id="KW-0456">Lyase</keyword>
<keyword id="KW-0460">Magnesium</keyword>
<keyword id="KW-0479">Metal-binding</keyword>
<keyword id="KW-1185">Reference proteome</keyword>